<reference key="1">
    <citation type="journal article" date="2004" name="Nat. Biotechnol.">
        <title>The genome sequence of the extreme thermophile Thermus thermophilus.</title>
        <authorList>
            <person name="Henne A."/>
            <person name="Brueggemann H."/>
            <person name="Raasch C."/>
            <person name="Wiezer A."/>
            <person name="Hartsch T."/>
            <person name="Liesegang H."/>
            <person name="Johann A."/>
            <person name="Lienard T."/>
            <person name="Gohl O."/>
            <person name="Martinez-Arias R."/>
            <person name="Jacobi C."/>
            <person name="Starkuviene V."/>
            <person name="Schlenczeck S."/>
            <person name="Dencker S."/>
            <person name="Huber R."/>
            <person name="Klenk H.-P."/>
            <person name="Kramer W."/>
            <person name="Merkl R."/>
            <person name="Gottschalk G."/>
            <person name="Fritz H.-J."/>
        </authorList>
    </citation>
    <scope>NUCLEOTIDE SEQUENCE [LARGE SCALE GENOMIC DNA]</scope>
    <source>
        <strain>ATCC BAA-163 / DSM 7039 / HB27</strain>
    </source>
</reference>
<gene>
    <name type="primary">rpsS</name>
    <name type="synonym">rps19</name>
    <name type="ordered locus">TT_C1324</name>
</gene>
<protein>
    <recommendedName>
        <fullName evidence="2">Small ribosomal subunit protein uS19</fullName>
    </recommendedName>
    <alternativeName>
        <fullName>30S ribosomal protein S19</fullName>
    </alternativeName>
</protein>
<dbReference type="EMBL" id="AE017221">
    <property type="protein sequence ID" value="AAS81666.1"/>
    <property type="molecule type" value="Genomic_DNA"/>
</dbReference>
<dbReference type="RefSeq" id="WP_011173711.1">
    <property type="nucleotide sequence ID" value="NZ_CP133179.1"/>
</dbReference>
<dbReference type="PDB" id="4KVB">
    <property type="method" value="X-ray"/>
    <property type="resolution" value="4.20 A"/>
    <property type="chains" value="S=1-93"/>
</dbReference>
<dbReference type="PDB" id="4V4G">
    <property type="method" value="X-ray"/>
    <property type="resolution" value="11.50 A"/>
    <property type="chains" value="S=2-81"/>
</dbReference>
<dbReference type="PDB" id="4V4I">
    <property type="method" value="X-ray"/>
    <property type="resolution" value="3.71 A"/>
    <property type="chains" value="t=1-93"/>
</dbReference>
<dbReference type="PDB" id="4V4J">
    <property type="method" value="X-ray"/>
    <property type="resolution" value="3.83 A"/>
    <property type="chains" value="t=1-93"/>
</dbReference>
<dbReference type="PDB" id="4V63">
    <property type="method" value="X-ray"/>
    <property type="resolution" value="3.21 A"/>
    <property type="chains" value="AS/CS=1-93"/>
</dbReference>
<dbReference type="PDB" id="4V67">
    <property type="method" value="X-ray"/>
    <property type="resolution" value="3.00 A"/>
    <property type="chains" value="AS/CS=1-93"/>
</dbReference>
<dbReference type="PDB" id="4V7P">
    <property type="method" value="X-ray"/>
    <property type="resolution" value="3.62 A"/>
    <property type="chains" value="AS/DS=4-81"/>
</dbReference>
<dbReference type="PDB" id="4V83">
    <property type="method" value="X-ray"/>
    <property type="resolution" value="3.50 A"/>
    <property type="chains" value="AS/CS=4-81"/>
</dbReference>
<dbReference type="PDB" id="4V84">
    <property type="method" value="X-ray"/>
    <property type="resolution" value="3.40 A"/>
    <property type="chains" value="AS/CS=4-81"/>
</dbReference>
<dbReference type="PDB" id="4V9J">
    <property type="method" value="X-ray"/>
    <property type="resolution" value="3.86 A"/>
    <property type="chains" value="AS/CS=4-82"/>
</dbReference>
<dbReference type="PDB" id="4V9K">
    <property type="method" value="X-ray"/>
    <property type="resolution" value="3.50 A"/>
    <property type="chains" value="AS/CS=4-82"/>
</dbReference>
<dbReference type="PDB" id="4V9L">
    <property type="method" value="X-ray"/>
    <property type="resolution" value="3.50 A"/>
    <property type="chains" value="AS/CS=4-82"/>
</dbReference>
<dbReference type="PDB" id="4V9M">
    <property type="method" value="X-ray"/>
    <property type="resolution" value="4.00 A"/>
    <property type="chains" value="AS/CS=4-82"/>
</dbReference>
<dbReference type="PDB" id="4V9N">
    <property type="method" value="X-ray"/>
    <property type="resolution" value="3.40 A"/>
    <property type="chains" value="AS/CS=4-81"/>
</dbReference>
<dbReference type="PDB" id="4V9Q">
    <property type="method" value="X-ray"/>
    <property type="resolution" value="3.40 A"/>
    <property type="chains" value="BS/DS=4-81"/>
</dbReference>
<dbReference type="PDB" id="4W29">
    <property type="method" value="X-ray"/>
    <property type="resolution" value="3.80 A"/>
    <property type="chains" value="AS/CS=4-82"/>
</dbReference>
<dbReference type="PDB" id="4XEJ">
    <property type="method" value="X-ray"/>
    <property type="resolution" value="3.80 A"/>
    <property type="chains" value="AS19/BS19=4-81"/>
</dbReference>
<dbReference type="PDB" id="5J4D">
    <property type="method" value="X-ray"/>
    <property type="resolution" value="3.10 A"/>
    <property type="chains" value="BB/GD=1-93"/>
</dbReference>
<dbReference type="PDB" id="5V8I">
    <property type="method" value="X-ray"/>
    <property type="resolution" value="3.25 A"/>
    <property type="chains" value="1s/2s=1-93"/>
</dbReference>
<dbReference type="PDB" id="6B4V">
    <property type="method" value="X-ray"/>
    <property type="resolution" value="3.40 A"/>
    <property type="chains" value="BB/FD=1-93"/>
</dbReference>
<dbReference type="PDB" id="6BOH">
    <property type="method" value="X-ray"/>
    <property type="resolution" value="3.40 A"/>
    <property type="chains" value="CB/HD=1-93"/>
</dbReference>
<dbReference type="PDB" id="6BOK">
    <property type="method" value="X-ray"/>
    <property type="resolution" value="3.55 A"/>
    <property type="chains" value="AB/DD=1-93"/>
</dbReference>
<dbReference type="PDB" id="6N1D">
    <property type="method" value="X-ray"/>
    <property type="resolution" value="3.20 A"/>
    <property type="chains" value="AS19/BS19=2-93"/>
</dbReference>
<dbReference type="PDBsum" id="4KVB"/>
<dbReference type="PDBsum" id="4V4G"/>
<dbReference type="PDBsum" id="4V4I"/>
<dbReference type="PDBsum" id="4V4J"/>
<dbReference type="PDBsum" id="4V63"/>
<dbReference type="PDBsum" id="4V67"/>
<dbReference type="PDBsum" id="4V7P"/>
<dbReference type="PDBsum" id="4V83"/>
<dbReference type="PDBsum" id="4V84"/>
<dbReference type="PDBsum" id="4V9J"/>
<dbReference type="PDBsum" id="4V9K"/>
<dbReference type="PDBsum" id="4V9L"/>
<dbReference type="PDBsum" id="4V9M"/>
<dbReference type="PDBsum" id="4V9N"/>
<dbReference type="PDBsum" id="4V9Q"/>
<dbReference type="PDBsum" id="4W29"/>
<dbReference type="PDBsum" id="4XEJ"/>
<dbReference type="PDBsum" id="5J4D"/>
<dbReference type="PDBsum" id="5V8I"/>
<dbReference type="PDBsum" id="6B4V"/>
<dbReference type="PDBsum" id="6BOH"/>
<dbReference type="PDBsum" id="6BOK"/>
<dbReference type="PDBsum" id="6N1D"/>
<dbReference type="BMRB" id="P62660"/>
<dbReference type="SMR" id="P62660"/>
<dbReference type="IntAct" id="P62660">
    <property type="interactions" value="4"/>
</dbReference>
<dbReference type="DrugBank" id="DB08185">
    <property type="generic name" value="2-METHYLTHIO-N6-ISOPENTENYL-ADENOSINE-5'-MONOPHOSPHATE"/>
</dbReference>
<dbReference type="GeneID" id="93866431"/>
<dbReference type="KEGG" id="tth:TT_C1324"/>
<dbReference type="eggNOG" id="COG0185">
    <property type="taxonomic scope" value="Bacteria"/>
</dbReference>
<dbReference type="HOGENOM" id="CLU_144911_0_1_0"/>
<dbReference type="OrthoDB" id="9797833at2"/>
<dbReference type="EvolutionaryTrace" id="P62660"/>
<dbReference type="Proteomes" id="UP000000592">
    <property type="component" value="Chromosome"/>
</dbReference>
<dbReference type="GO" id="GO:0005737">
    <property type="term" value="C:cytoplasm"/>
    <property type="evidence" value="ECO:0007669"/>
    <property type="project" value="UniProtKB-ARBA"/>
</dbReference>
<dbReference type="GO" id="GO:0015935">
    <property type="term" value="C:small ribosomal subunit"/>
    <property type="evidence" value="ECO:0007669"/>
    <property type="project" value="InterPro"/>
</dbReference>
<dbReference type="GO" id="GO:0019843">
    <property type="term" value="F:rRNA binding"/>
    <property type="evidence" value="ECO:0007669"/>
    <property type="project" value="UniProtKB-UniRule"/>
</dbReference>
<dbReference type="GO" id="GO:0003735">
    <property type="term" value="F:structural constituent of ribosome"/>
    <property type="evidence" value="ECO:0007669"/>
    <property type="project" value="InterPro"/>
</dbReference>
<dbReference type="GO" id="GO:0000028">
    <property type="term" value="P:ribosomal small subunit assembly"/>
    <property type="evidence" value="ECO:0007669"/>
    <property type="project" value="TreeGrafter"/>
</dbReference>
<dbReference type="GO" id="GO:0006412">
    <property type="term" value="P:translation"/>
    <property type="evidence" value="ECO:0007669"/>
    <property type="project" value="UniProtKB-UniRule"/>
</dbReference>
<dbReference type="FunFam" id="3.30.860.10:FF:000001">
    <property type="entry name" value="30S ribosomal protein S19"/>
    <property type="match status" value="1"/>
</dbReference>
<dbReference type="Gene3D" id="3.30.860.10">
    <property type="entry name" value="30s Ribosomal Protein S19, Chain A"/>
    <property type="match status" value="1"/>
</dbReference>
<dbReference type="HAMAP" id="MF_00531">
    <property type="entry name" value="Ribosomal_uS19"/>
    <property type="match status" value="1"/>
</dbReference>
<dbReference type="InterPro" id="IPR002222">
    <property type="entry name" value="Ribosomal_uS19"/>
</dbReference>
<dbReference type="InterPro" id="IPR005732">
    <property type="entry name" value="Ribosomal_uS19_bac-type"/>
</dbReference>
<dbReference type="InterPro" id="IPR020934">
    <property type="entry name" value="Ribosomal_uS19_CS"/>
</dbReference>
<dbReference type="InterPro" id="IPR023575">
    <property type="entry name" value="Ribosomal_uS19_SF"/>
</dbReference>
<dbReference type="NCBIfam" id="TIGR01050">
    <property type="entry name" value="rpsS_bact"/>
    <property type="match status" value="1"/>
</dbReference>
<dbReference type="PANTHER" id="PTHR11880">
    <property type="entry name" value="RIBOSOMAL PROTEIN S19P FAMILY MEMBER"/>
    <property type="match status" value="1"/>
</dbReference>
<dbReference type="PANTHER" id="PTHR11880:SF8">
    <property type="entry name" value="SMALL RIBOSOMAL SUBUNIT PROTEIN US19M"/>
    <property type="match status" value="1"/>
</dbReference>
<dbReference type="Pfam" id="PF00203">
    <property type="entry name" value="Ribosomal_S19"/>
    <property type="match status" value="1"/>
</dbReference>
<dbReference type="PIRSF" id="PIRSF002144">
    <property type="entry name" value="Ribosomal_S19"/>
    <property type="match status" value="1"/>
</dbReference>
<dbReference type="PRINTS" id="PR00975">
    <property type="entry name" value="RIBOSOMALS19"/>
</dbReference>
<dbReference type="SUPFAM" id="SSF54570">
    <property type="entry name" value="Ribosomal protein S19"/>
    <property type="match status" value="1"/>
</dbReference>
<dbReference type="PROSITE" id="PS00323">
    <property type="entry name" value="RIBOSOMAL_S19"/>
    <property type="match status" value="1"/>
</dbReference>
<accession>P62660</accession>
<name>RS19_THET2</name>
<feature type="initiator methionine" description="Removed" evidence="1">
    <location>
        <position position="1"/>
    </location>
</feature>
<feature type="chain" id="PRO_0000129926" description="Small ribosomal subunit protein uS19">
    <location>
        <begin position="2"/>
        <end position="93"/>
    </location>
</feature>
<feature type="strand" evidence="5">
    <location>
        <begin position="6"/>
        <end position="8"/>
    </location>
</feature>
<feature type="helix" evidence="4">
    <location>
        <begin position="13"/>
        <end position="25"/>
    </location>
</feature>
<feature type="strand" evidence="7">
    <location>
        <begin position="30"/>
        <end position="32"/>
    </location>
</feature>
<feature type="strand" evidence="6">
    <location>
        <begin position="37"/>
        <end position="39"/>
    </location>
</feature>
<feature type="helix" evidence="3">
    <location>
        <begin position="42"/>
        <end position="44"/>
    </location>
</feature>
<feature type="strand" evidence="4">
    <location>
        <begin position="48"/>
        <end position="52"/>
    </location>
</feature>
<feature type="strand" evidence="6">
    <location>
        <begin position="54"/>
        <end position="56"/>
    </location>
</feature>
<feature type="strand" evidence="4">
    <location>
        <begin position="57"/>
        <end position="61"/>
    </location>
</feature>
<feature type="strand" evidence="6">
    <location>
        <begin position="63"/>
        <end position="66"/>
    </location>
</feature>
<feature type="strand" evidence="4">
    <location>
        <begin position="68"/>
        <end position="71"/>
    </location>
</feature>
<feature type="helix" evidence="4">
    <location>
        <begin position="72"/>
        <end position="74"/>
    </location>
</feature>
<organism>
    <name type="scientific">Thermus thermophilus (strain ATCC BAA-163 / DSM 7039 / HB27)</name>
    <dbReference type="NCBI Taxonomy" id="262724"/>
    <lineage>
        <taxon>Bacteria</taxon>
        <taxon>Thermotogati</taxon>
        <taxon>Deinococcota</taxon>
        <taxon>Deinococci</taxon>
        <taxon>Thermales</taxon>
        <taxon>Thermaceae</taxon>
        <taxon>Thermus</taxon>
    </lineage>
</organism>
<comment type="function">
    <text evidence="1">Protein S19 forms a complex with S13 that binds strongly to the 16S ribosomal RNA.</text>
</comment>
<comment type="similarity">
    <text evidence="2">Belongs to the universal ribosomal protein uS19 family.</text>
</comment>
<sequence length="93" mass="10581">MPRSLKKGVFVDDHLLEKVLELNAKGEKRLIKTWSRRSTIVPEMVGHTIAVYNGKQHVPVYITENMVGHKLGEFAPTRTYRGHGKEAKATKKK</sequence>
<evidence type="ECO:0000250" key="1"/>
<evidence type="ECO:0000305" key="2"/>
<evidence type="ECO:0007829" key="3">
    <source>
        <dbReference type="PDB" id="4V63"/>
    </source>
</evidence>
<evidence type="ECO:0007829" key="4">
    <source>
        <dbReference type="PDB" id="4V67"/>
    </source>
</evidence>
<evidence type="ECO:0007829" key="5">
    <source>
        <dbReference type="PDB" id="4V84"/>
    </source>
</evidence>
<evidence type="ECO:0007829" key="6">
    <source>
        <dbReference type="PDB" id="4V9K"/>
    </source>
</evidence>
<evidence type="ECO:0007829" key="7">
    <source>
        <dbReference type="PDB" id="4V9N"/>
    </source>
</evidence>
<proteinExistence type="evidence at protein level"/>
<keyword id="KW-0002">3D-structure</keyword>
<keyword id="KW-0687">Ribonucleoprotein</keyword>
<keyword id="KW-0689">Ribosomal protein</keyword>
<keyword id="KW-0694">RNA-binding</keyword>
<keyword id="KW-0699">rRNA-binding</keyword>